<comment type="function">
    <text evidence="1">The RuvA-RuvB-RuvC complex processes Holliday junction (HJ) DNA during genetic recombination and DNA repair, while the RuvA-RuvB complex plays an important role in the rescue of blocked DNA replication forks via replication fork reversal (RFR). RuvA specifically binds to HJ cruciform DNA, conferring on it an open structure. The RuvB hexamer acts as an ATP-dependent pump, pulling dsDNA into and through the RuvAB complex. HJ branch migration allows RuvC to scan DNA until it finds its consensus sequence, where it cleaves and resolves the cruciform DNA.</text>
</comment>
<comment type="subunit">
    <text evidence="1">Homotetramer. Forms an RuvA(8)-RuvB(12)-Holliday junction (HJ) complex. HJ DNA is sandwiched between 2 RuvA tetramers; dsDNA enters through RuvA and exits via RuvB. An RuvB hexamer assembles on each DNA strand where it exits the tetramer. Each RuvB hexamer is contacted by two RuvA subunits (via domain III) on 2 adjacent RuvB subunits; this complex drives branch migration. In the full resolvosome a probable DNA-RuvA(4)-RuvB(12)-RuvC(2) complex forms which resolves the HJ.</text>
</comment>
<comment type="subcellular location">
    <subcellularLocation>
        <location evidence="1">Cytoplasm</location>
    </subcellularLocation>
</comment>
<comment type="domain">
    <text evidence="1">Has three domains with a flexible linker between the domains II and III and assumes an 'L' shape. Domain III is highly mobile and contacts RuvB.</text>
</comment>
<comment type="similarity">
    <text evidence="1">Belongs to the RuvA family.</text>
</comment>
<name>RUVA_XANCP</name>
<evidence type="ECO:0000255" key="1">
    <source>
        <dbReference type="HAMAP-Rule" id="MF_00031"/>
    </source>
</evidence>
<proteinExistence type="inferred from homology"/>
<protein>
    <recommendedName>
        <fullName evidence="1">Holliday junction branch migration complex subunit RuvA</fullName>
    </recommendedName>
</protein>
<dbReference type="EMBL" id="AE008922">
    <property type="protein sequence ID" value="AAM42296.1"/>
    <property type="molecule type" value="Genomic_DNA"/>
</dbReference>
<dbReference type="RefSeq" id="NP_638372.1">
    <property type="nucleotide sequence ID" value="NC_003902.1"/>
</dbReference>
<dbReference type="RefSeq" id="WP_006450983.1">
    <property type="nucleotide sequence ID" value="NC_003902.1"/>
</dbReference>
<dbReference type="SMR" id="Q8P6E5"/>
<dbReference type="STRING" id="190485.XCC3025"/>
<dbReference type="EnsemblBacteria" id="AAM42296">
    <property type="protein sequence ID" value="AAM42296"/>
    <property type="gene ID" value="XCC3025"/>
</dbReference>
<dbReference type="GeneID" id="58012431"/>
<dbReference type="KEGG" id="xcc:XCC3025"/>
<dbReference type="PATRIC" id="fig|190485.4.peg.3227"/>
<dbReference type="eggNOG" id="COG0632">
    <property type="taxonomic scope" value="Bacteria"/>
</dbReference>
<dbReference type="HOGENOM" id="CLU_087936_0_0_6"/>
<dbReference type="OrthoDB" id="5293449at2"/>
<dbReference type="Proteomes" id="UP000001010">
    <property type="component" value="Chromosome"/>
</dbReference>
<dbReference type="GO" id="GO:0005737">
    <property type="term" value="C:cytoplasm"/>
    <property type="evidence" value="ECO:0007669"/>
    <property type="project" value="UniProtKB-SubCell"/>
</dbReference>
<dbReference type="GO" id="GO:0009379">
    <property type="term" value="C:Holliday junction helicase complex"/>
    <property type="evidence" value="ECO:0007669"/>
    <property type="project" value="InterPro"/>
</dbReference>
<dbReference type="GO" id="GO:0048476">
    <property type="term" value="C:Holliday junction resolvase complex"/>
    <property type="evidence" value="ECO:0007669"/>
    <property type="project" value="UniProtKB-UniRule"/>
</dbReference>
<dbReference type="GO" id="GO:0005524">
    <property type="term" value="F:ATP binding"/>
    <property type="evidence" value="ECO:0007669"/>
    <property type="project" value="InterPro"/>
</dbReference>
<dbReference type="GO" id="GO:0000400">
    <property type="term" value="F:four-way junction DNA binding"/>
    <property type="evidence" value="ECO:0007669"/>
    <property type="project" value="UniProtKB-UniRule"/>
</dbReference>
<dbReference type="GO" id="GO:0009378">
    <property type="term" value="F:four-way junction helicase activity"/>
    <property type="evidence" value="ECO:0000318"/>
    <property type="project" value="GO_Central"/>
</dbReference>
<dbReference type="GO" id="GO:0006310">
    <property type="term" value="P:DNA recombination"/>
    <property type="evidence" value="ECO:0007669"/>
    <property type="project" value="UniProtKB-UniRule"/>
</dbReference>
<dbReference type="GO" id="GO:0006281">
    <property type="term" value="P:DNA repair"/>
    <property type="evidence" value="ECO:0007669"/>
    <property type="project" value="UniProtKB-UniRule"/>
</dbReference>
<dbReference type="GO" id="GO:0009432">
    <property type="term" value="P:SOS response"/>
    <property type="evidence" value="ECO:0000318"/>
    <property type="project" value="GO_Central"/>
</dbReference>
<dbReference type="Gene3D" id="1.10.150.20">
    <property type="entry name" value="5' to 3' exonuclease, C-terminal subdomain"/>
    <property type="match status" value="1"/>
</dbReference>
<dbReference type="Gene3D" id="1.10.8.10">
    <property type="entry name" value="DNA helicase RuvA subunit, C-terminal domain"/>
    <property type="match status" value="1"/>
</dbReference>
<dbReference type="Gene3D" id="2.40.50.140">
    <property type="entry name" value="Nucleic acid-binding proteins"/>
    <property type="match status" value="1"/>
</dbReference>
<dbReference type="HAMAP" id="MF_00031">
    <property type="entry name" value="DNA_HJ_migration_RuvA"/>
    <property type="match status" value="1"/>
</dbReference>
<dbReference type="InterPro" id="IPR013849">
    <property type="entry name" value="DNA_helicase_Holl-junc_RuvA_I"/>
</dbReference>
<dbReference type="InterPro" id="IPR003583">
    <property type="entry name" value="Hlx-hairpin-Hlx_DNA-bd_motif"/>
</dbReference>
<dbReference type="InterPro" id="IPR012340">
    <property type="entry name" value="NA-bd_OB-fold"/>
</dbReference>
<dbReference type="InterPro" id="IPR000085">
    <property type="entry name" value="RuvA"/>
</dbReference>
<dbReference type="InterPro" id="IPR010994">
    <property type="entry name" value="RuvA_2-like"/>
</dbReference>
<dbReference type="InterPro" id="IPR011114">
    <property type="entry name" value="RuvA_C"/>
</dbReference>
<dbReference type="InterPro" id="IPR036267">
    <property type="entry name" value="RuvA_C_sf"/>
</dbReference>
<dbReference type="NCBIfam" id="TIGR00084">
    <property type="entry name" value="ruvA"/>
    <property type="match status" value="1"/>
</dbReference>
<dbReference type="Pfam" id="PF14520">
    <property type="entry name" value="HHH_5"/>
    <property type="match status" value="1"/>
</dbReference>
<dbReference type="Pfam" id="PF07499">
    <property type="entry name" value="RuvA_C"/>
    <property type="match status" value="1"/>
</dbReference>
<dbReference type="Pfam" id="PF01330">
    <property type="entry name" value="RuvA_N"/>
    <property type="match status" value="1"/>
</dbReference>
<dbReference type="SMART" id="SM00278">
    <property type="entry name" value="HhH1"/>
    <property type="match status" value="2"/>
</dbReference>
<dbReference type="SUPFAM" id="SSF46929">
    <property type="entry name" value="DNA helicase RuvA subunit, C-terminal domain"/>
    <property type="match status" value="1"/>
</dbReference>
<dbReference type="SUPFAM" id="SSF50249">
    <property type="entry name" value="Nucleic acid-binding proteins"/>
    <property type="match status" value="1"/>
</dbReference>
<dbReference type="SUPFAM" id="SSF47781">
    <property type="entry name" value="RuvA domain 2-like"/>
    <property type="match status" value="1"/>
</dbReference>
<accession>Q8P6E5</accession>
<sequence>MIGRLRGILAYKQPPWLVIDVGGVGYELEAPMSTFYDLPDVGRDVILFTHYAQKEDSVSLYGFLREGERRLFRDVQKVTGIGAKIALAVLSGVTVDEFARLITSGDITALTRIPGIGKKTAERMVVELRDRAADFSSGAPITGQLGPDAVSEATVALQQLGYKPAEAARMAREAGAEGDEVATVIRKALQAALR</sequence>
<feature type="chain" id="PRO_0000094713" description="Holliday junction branch migration complex subunit RuvA">
    <location>
        <begin position="1"/>
        <end position="194"/>
    </location>
</feature>
<feature type="region of interest" description="Domain I" evidence="1">
    <location>
        <begin position="1"/>
        <end position="64"/>
    </location>
</feature>
<feature type="region of interest" description="Domain II" evidence="1">
    <location>
        <begin position="65"/>
        <end position="140"/>
    </location>
</feature>
<feature type="region of interest" description="Flexible linker" evidence="1">
    <location>
        <begin position="140"/>
        <end position="144"/>
    </location>
</feature>
<feature type="region of interest" description="Domain III" evidence="1">
    <location>
        <begin position="145"/>
        <end position="194"/>
    </location>
</feature>
<keyword id="KW-0963">Cytoplasm</keyword>
<keyword id="KW-0227">DNA damage</keyword>
<keyword id="KW-0233">DNA recombination</keyword>
<keyword id="KW-0234">DNA repair</keyword>
<keyword id="KW-0238">DNA-binding</keyword>
<keyword id="KW-1185">Reference proteome</keyword>
<reference key="1">
    <citation type="journal article" date="2002" name="Nature">
        <title>Comparison of the genomes of two Xanthomonas pathogens with differing host specificities.</title>
        <authorList>
            <person name="da Silva A.C.R."/>
            <person name="Ferro J.A."/>
            <person name="Reinach F.C."/>
            <person name="Farah C.S."/>
            <person name="Furlan L.R."/>
            <person name="Quaggio R.B."/>
            <person name="Monteiro-Vitorello C.B."/>
            <person name="Van Sluys M.A."/>
            <person name="Almeida N.F. Jr."/>
            <person name="Alves L.M.C."/>
            <person name="do Amaral A.M."/>
            <person name="Bertolini M.C."/>
            <person name="Camargo L.E.A."/>
            <person name="Camarotte G."/>
            <person name="Cannavan F."/>
            <person name="Cardozo J."/>
            <person name="Chambergo F."/>
            <person name="Ciapina L.P."/>
            <person name="Cicarelli R.M.B."/>
            <person name="Coutinho L.L."/>
            <person name="Cursino-Santos J.R."/>
            <person name="El-Dorry H."/>
            <person name="Faria J.B."/>
            <person name="Ferreira A.J.S."/>
            <person name="Ferreira R.C.C."/>
            <person name="Ferro M.I.T."/>
            <person name="Formighieri E.F."/>
            <person name="Franco M.C."/>
            <person name="Greggio C.C."/>
            <person name="Gruber A."/>
            <person name="Katsuyama A.M."/>
            <person name="Kishi L.T."/>
            <person name="Leite R.P."/>
            <person name="Lemos E.G.M."/>
            <person name="Lemos M.V.F."/>
            <person name="Locali E.C."/>
            <person name="Machado M.A."/>
            <person name="Madeira A.M.B.N."/>
            <person name="Martinez-Rossi N.M."/>
            <person name="Martins E.C."/>
            <person name="Meidanis J."/>
            <person name="Menck C.F.M."/>
            <person name="Miyaki C.Y."/>
            <person name="Moon D.H."/>
            <person name="Moreira L.M."/>
            <person name="Novo M.T.M."/>
            <person name="Okura V.K."/>
            <person name="Oliveira M.C."/>
            <person name="Oliveira V.R."/>
            <person name="Pereira H.A."/>
            <person name="Rossi A."/>
            <person name="Sena J.A.D."/>
            <person name="Silva C."/>
            <person name="de Souza R.F."/>
            <person name="Spinola L.A.F."/>
            <person name="Takita M.A."/>
            <person name="Tamura R.E."/>
            <person name="Teixeira E.C."/>
            <person name="Tezza R.I.D."/>
            <person name="Trindade dos Santos M."/>
            <person name="Truffi D."/>
            <person name="Tsai S.M."/>
            <person name="White F.F."/>
            <person name="Setubal J.C."/>
            <person name="Kitajima J.P."/>
        </authorList>
    </citation>
    <scope>NUCLEOTIDE SEQUENCE [LARGE SCALE GENOMIC DNA]</scope>
    <source>
        <strain>ATCC 33913 / DSM 3586 / NCPPB 528 / LMG 568 / P 25</strain>
    </source>
</reference>
<organism>
    <name type="scientific">Xanthomonas campestris pv. campestris (strain ATCC 33913 / DSM 3586 / NCPPB 528 / LMG 568 / P 25)</name>
    <dbReference type="NCBI Taxonomy" id="190485"/>
    <lineage>
        <taxon>Bacteria</taxon>
        <taxon>Pseudomonadati</taxon>
        <taxon>Pseudomonadota</taxon>
        <taxon>Gammaproteobacteria</taxon>
        <taxon>Lysobacterales</taxon>
        <taxon>Lysobacteraceae</taxon>
        <taxon>Xanthomonas</taxon>
    </lineage>
</organism>
<gene>
    <name evidence="1" type="primary">ruvA</name>
    <name type="ordered locus">XCC3025</name>
</gene>